<reference key="1">
    <citation type="submission" date="2007-09" db="EMBL/GenBank/DDBJ databases">
        <title>Complete genome sequence of Rickettsia rickettsii.</title>
        <authorList>
            <person name="Madan A."/>
            <person name="Fahey J."/>
            <person name="Helton E."/>
            <person name="Ketteman M."/>
            <person name="Madan A."/>
            <person name="Rodrigues S."/>
            <person name="Sanchez A."/>
            <person name="Dasch G."/>
            <person name="Eremeeva M."/>
        </authorList>
    </citation>
    <scope>NUCLEOTIDE SEQUENCE [LARGE SCALE GENOMIC DNA]</scope>
    <source>
        <strain>Sheila Smith</strain>
    </source>
</reference>
<evidence type="ECO:0000255" key="1">
    <source>
        <dbReference type="HAMAP-Rule" id="MF_00038"/>
    </source>
</evidence>
<dbReference type="EC" id="2.7.8.13" evidence="1"/>
<dbReference type="EMBL" id="CP000848">
    <property type="protein sequence ID" value="ABV76500.1"/>
    <property type="molecule type" value="Genomic_DNA"/>
</dbReference>
<dbReference type="RefSeq" id="WP_012151071.1">
    <property type="nucleotide sequence ID" value="NZ_CP121767.1"/>
</dbReference>
<dbReference type="SMR" id="A8GSX5"/>
<dbReference type="GeneID" id="79937589"/>
<dbReference type="KEGG" id="rri:A1G_05025"/>
<dbReference type="HOGENOM" id="CLU_023982_0_0_5"/>
<dbReference type="UniPathway" id="UPA00219"/>
<dbReference type="Proteomes" id="UP000006832">
    <property type="component" value="Chromosome"/>
</dbReference>
<dbReference type="GO" id="GO:0005886">
    <property type="term" value="C:plasma membrane"/>
    <property type="evidence" value="ECO:0007669"/>
    <property type="project" value="UniProtKB-SubCell"/>
</dbReference>
<dbReference type="GO" id="GO:0046872">
    <property type="term" value="F:metal ion binding"/>
    <property type="evidence" value="ECO:0007669"/>
    <property type="project" value="UniProtKB-KW"/>
</dbReference>
<dbReference type="GO" id="GO:0008963">
    <property type="term" value="F:phospho-N-acetylmuramoyl-pentapeptide-transferase activity"/>
    <property type="evidence" value="ECO:0007669"/>
    <property type="project" value="UniProtKB-UniRule"/>
</dbReference>
<dbReference type="GO" id="GO:0051992">
    <property type="term" value="F:UDP-N-acetylmuramoyl-L-alanyl-D-glutamyl-meso-2,6-diaminopimelyl-D-alanyl-D-alanine:undecaprenyl-phosphate transferase activity"/>
    <property type="evidence" value="ECO:0007669"/>
    <property type="project" value="RHEA"/>
</dbReference>
<dbReference type="GO" id="GO:0051301">
    <property type="term" value="P:cell division"/>
    <property type="evidence" value="ECO:0007669"/>
    <property type="project" value="UniProtKB-KW"/>
</dbReference>
<dbReference type="GO" id="GO:0071555">
    <property type="term" value="P:cell wall organization"/>
    <property type="evidence" value="ECO:0007669"/>
    <property type="project" value="UniProtKB-KW"/>
</dbReference>
<dbReference type="GO" id="GO:0009252">
    <property type="term" value="P:peptidoglycan biosynthetic process"/>
    <property type="evidence" value="ECO:0007669"/>
    <property type="project" value="UniProtKB-UniRule"/>
</dbReference>
<dbReference type="GO" id="GO:0008360">
    <property type="term" value="P:regulation of cell shape"/>
    <property type="evidence" value="ECO:0007669"/>
    <property type="project" value="UniProtKB-KW"/>
</dbReference>
<dbReference type="CDD" id="cd06852">
    <property type="entry name" value="GT_MraY"/>
    <property type="match status" value="1"/>
</dbReference>
<dbReference type="HAMAP" id="MF_00038">
    <property type="entry name" value="MraY"/>
    <property type="match status" value="1"/>
</dbReference>
<dbReference type="InterPro" id="IPR000715">
    <property type="entry name" value="Glycosyl_transferase_4"/>
</dbReference>
<dbReference type="InterPro" id="IPR003524">
    <property type="entry name" value="PNAcMuramoyl-5peptid_Trfase"/>
</dbReference>
<dbReference type="InterPro" id="IPR018480">
    <property type="entry name" value="PNAcMuramoyl-5peptid_Trfase_CS"/>
</dbReference>
<dbReference type="NCBIfam" id="TIGR00445">
    <property type="entry name" value="mraY"/>
    <property type="match status" value="1"/>
</dbReference>
<dbReference type="PANTHER" id="PTHR22926">
    <property type="entry name" value="PHOSPHO-N-ACETYLMURAMOYL-PENTAPEPTIDE-TRANSFERASE"/>
    <property type="match status" value="1"/>
</dbReference>
<dbReference type="PANTHER" id="PTHR22926:SF5">
    <property type="entry name" value="PHOSPHO-N-ACETYLMURAMOYL-PENTAPEPTIDE-TRANSFERASE HOMOLOG"/>
    <property type="match status" value="1"/>
</dbReference>
<dbReference type="Pfam" id="PF00953">
    <property type="entry name" value="Glycos_transf_4"/>
    <property type="match status" value="1"/>
</dbReference>
<dbReference type="PROSITE" id="PS01347">
    <property type="entry name" value="MRAY_1"/>
    <property type="match status" value="1"/>
</dbReference>
<dbReference type="PROSITE" id="PS01348">
    <property type="entry name" value="MRAY_2"/>
    <property type="match status" value="1"/>
</dbReference>
<organism>
    <name type="scientific">Rickettsia rickettsii (strain Sheila Smith)</name>
    <dbReference type="NCBI Taxonomy" id="392021"/>
    <lineage>
        <taxon>Bacteria</taxon>
        <taxon>Pseudomonadati</taxon>
        <taxon>Pseudomonadota</taxon>
        <taxon>Alphaproteobacteria</taxon>
        <taxon>Rickettsiales</taxon>
        <taxon>Rickettsiaceae</taxon>
        <taxon>Rickettsieae</taxon>
        <taxon>Rickettsia</taxon>
        <taxon>spotted fever group</taxon>
    </lineage>
</organism>
<keyword id="KW-0131">Cell cycle</keyword>
<keyword id="KW-0132">Cell division</keyword>
<keyword id="KW-0997">Cell inner membrane</keyword>
<keyword id="KW-1003">Cell membrane</keyword>
<keyword id="KW-0133">Cell shape</keyword>
<keyword id="KW-0961">Cell wall biogenesis/degradation</keyword>
<keyword id="KW-0460">Magnesium</keyword>
<keyword id="KW-0472">Membrane</keyword>
<keyword id="KW-0479">Metal-binding</keyword>
<keyword id="KW-0573">Peptidoglycan synthesis</keyword>
<keyword id="KW-0808">Transferase</keyword>
<keyword id="KW-0812">Transmembrane</keyword>
<keyword id="KW-1133">Transmembrane helix</keyword>
<gene>
    <name evidence="1" type="primary">mraY</name>
    <name type="ordered locus">A1G_05025</name>
</gene>
<feature type="chain" id="PRO_1000003049" description="Phospho-N-acetylmuramoyl-pentapeptide-transferase">
    <location>
        <begin position="1"/>
        <end position="361"/>
    </location>
</feature>
<feature type="transmembrane region" description="Helical" evidence="1">
    <location>
        <begin position="28"/>
        <end position="48"/>
    </location>
</feature>
<feature type="transmembrane region" description="Helical" evidence="1">
    <location>
        <begin position="74"/>
        <end position="94"/>
    </location>
</feature>
<feature type="transmembrane region" description="Helical" evidence="1">
    <location>
        <begin position="99"/>
        <end position="119"/>
    </location>
</feature>
<feature type="transmembrane region" description="Helical" evidence="1">
    <location>
        <begin position="133"/>
        <end position="153"/>
    </location>
</feature>
<feature type="transmembrane region" description="Helical" evidence="1">
    <location>
        <begin position="168"/>
        <end position="188"/>
    </location>
</feature>
<feature type="transmembrane region" description="Helical" evidence="1">
    <location>
        <begin position="203"/>
        <end position="223"/>
    </location>
</feature>
<feature type="transmembrane region" description="Helical" evidence="1">
    <location>
        <begin position="236"/>
        <end position="256"/>
    </location>
</feature>
<feature type="transmembrane region" description="Helical" evidence="1">
    <location>
        <begin position="263"/>
        <end position="283"/>
    </location>
</feature>
<feature type="transmembrane region" description="Helical" evidence="1">
    <location>
        <begin position="288"/>
        <end position="308"/>
    </location>
</feature>
<feature type="transmembrane region" description="Helical" evidence="1">
    <location>
        <begin position="338"/>
        <end position="358"/>
    </location>
</feature>
<sequence>MLYNLLLPHIHNSHIANLFHYITFRSGLAIIITLSLSFITGPILIEFLRSIQKNGQPIRSDGPESHQTKVGTPTMGGIMIILSSCLSTLLLADLTNKYIWITLFGFISFGIIGFMDDYAKVTKNNHYGVRGKSKLLLQGIISVIICVLLEYLDKSPSHLLNVPFFKNLSLDLGYCYIVFAIFVIVGSSNAVNLTDGLDGLATVPIAFTAGSFALISYLVGNLIYSNYLQLTYIPNTGELTVLCAGLVGSCLGFLWFNAQPAEVFMGDTGSLSLGGVLGIISVITKHEIVLAIVGGLFVIETASVILQVYYFKATKGKRIFKMAPLHHHFEKHGWAESKVVIRFWIISVIFALIGLSSLKLR</sequence>
<protein>
    <recommendedName>
        <fullName evidence="1">Phospho-N-acetylmuramoyl-pentapeptide-transferase</fullName>
        <ecNumber evidence="1">2.7.8.13</ecNumber>
    </recommendedName>
    <alternativeName>
        <fullName evidence="1">UDP-MurNAc-pentapeptide phosphotransferase</fullName>
    </alternativeName>
</protein>
<name>MRAY_RICRS</name>
<accession>A8GSX5</accession>
<proteinExistence type="inferred from homology"/>
<comment type="function">
    <text evidence="1">Catalyzes the initial step of the lipid cycle reactions in the biosynthesis of the cell wall peptidoglycan: transfers peptidoglycan precursor phospho-MurNAc-pentapeptide from UDP-MurNAc-pentapeptide onto the lipid carrier undecaprenyl phosphate, yielding undecaprenyl-pyrophosphoryl-MurNAc-pentapeptide, known as lipid I.</text>
</comment>
<comment type="catalytic activity">
    <reaction evidence="1">
        <text>UDP-N-acetyl-alpha-D-muramoyl-L-alanyl-gamma-D-glutamyl-meso-2,6-diaminopimeloyl-D-alanyl-D-alanine + di-trans,octa-cis-undecaprenyl phosphate = di-trans,octa-cis-undecaprenyl diphospho-N-acetyl-alpha-D-muramoyl-L-alanyl-D-glutamyl-meso-2,6-diaminopimeloyl-D-alanyl-D-alanine + UMP</text>
        <dbReference type="Rhea" id="RHEA:28386"/>
        <dbReference type="ChEBI" id="CHEBI:57865"/>
        <dbReference type="ChEBI" id="CHEBI:60392"/>
        <dbReference type="ChEBI" id="CHEBI:61386"/>
        <dbReference type="ChEBI" id="CHEBI:61387"/>
        <dbReference type="EC" id="2.7.8.13"/>
    </reaction>
</comment>
<comment type="cofactor">
    <cofactor evidence="1">
        <name>Mg(2+)</name>
        <dbReference type="ChEBI" id="CHEBI:18420"/>
    </cofactor>
</comment>
<comment type="pathway">
    <text evidence="1">Cell wall biogenesis; peptidoglycan biosynthesis.</text>
</comment>
<comment type="subcellular location">
    <subcellularLocation>
        <location evidence="1">Cell inner membrane</location>
        <topology evidence="1">Multi-pass membrane protein</topology>
    </subcellularLocation>
</comment>
<comment type="similarity">
    <text evidence="1">Belongs to the glycosyltransferase 4 family. MraY subfamily.</text>
</comment>